<dbReference type="EMBL" id="CU928160">
    <property type="protein sequence ID" value="CAQ98628.1"/>
    <property type="molecule type" value="Genomic_DNA"/>
</dbReference>
<dbReference type="RefSeq" id="WP_000124850.1">
    <property type="nucleotide sequence ID" value="NC_011741.1"/>
</dbReference>
<dbReference type="SMR" id="B7M1C4"/>
<dbReference type="GeneID" id="98388757"/>
<dbReference type="KEGG" id="ecr:ECIAI1_1771"/>
<dbReference type="HOGENOM" id="CLU_123265_0_1_6"/>
<dbReference type="GO" id="GO:1990904">
    <property type="term" value="C:ribonucleoprotein complex"/>
    <property type="evidence" value="ECO:0007669"/>
    <property type="project" value="UniProtKB-KW"/>
</dbReference>
<dbReference type="GO" id="GO:0005840">
    <property type="term" value="C:ribosome"/>
    <property type="evidence" value="ECO:0007669"/>
    <property type="project" value="UniProtKB-KW"/>
</dbReference>
<dbReference type="GO" id="GO:0019843">
    <property type="term" value="F:rRNA binding"/>
    <property type="evidence" value="ECO:0007669"/>
    <property type="project" value="UniProtKB-UniRule"/>
</dbReference>
<dbReference type="GO" id="GO:0003735">
    <property type="term" value="F:structural constituent of ribosome"/>
    <property type="evidence" value="ECO:0007669"/>
    <property type="project" value="InterPro"/>
</dbReference>
<dbReference type="GO" id="GO:0000027">
    <property type="term" value="P:ribosomal large subunit assembly"/>
    <property type="evidence" value="ECO:0007669"/>
    <property type="project" value="UniProtKB-UniRule"/>
</dbReference>
<dbReference type="GO" id="GO:0006412">
    <property type="term" value="P:translation"/>
    <property type="evidence" value="ECO:0007669"/>
    <property type="project" value="InterPro"/>
</dbReference>
<dbReference type="CDD" id="cd07026">
    <property type="entry name" value="Ribosomal_L20"/>
    <property type="match status" value="1"/>
</dbReference>
<dbReference type="FunFam" id="1.10.1900.20:FF:000001">
    <property type="entry name" value="50S ribosomal protein L20"/>
    <property type="match status" value="1"/>
</dbReference>
<dbReference type="Gene3D" id="6.10.160.10">
    <property type="match status" value="1"/>
</dbReference>
<dbReference type="Gene3D" id="1.10.1900.20">
    <property type="entry name" value="Ribosomal protein L20"/>
    <property type="match status" value="1"/>
</dbReference>
<dbReference type="HAMAP" id="MF_00382">
    <property type="entry name" value="Ribosomal_bL20"/>
    <property type="match status" value="1"/>
</dbReference>
<dbReference type="InterPro" id="IPR005813">
    <property type="entry name" value="Ribosomal_bL20"/>
</dbReference>
<dbReference type="InterPro" id="IPR049946">
    <property type="entry name" value="RIBOSOMAL_L20_CS"/>
</dbReference>
<dbReference type="InterPro" id="IPR035566">
    <property type="entry name" value="Ribosomal_protein_bL20_C"/>
</dbReference>
<dbReference type="NCBIfam" id="TIGR01032">
    <property type="entry name" value="rplT_bact"/>
    <property type="match status" value="1"/>
</dbReference>
<dbReference type="PANTHER" id="PTHR10986">
    <property type="entry name" value="39S RIBOSOMAL PROTEIN L20"/>
    <property type="match status" value="1"/>
</dbReference>
<dbReference type="Pfam" id="PF00453">
    <property type="entry name" value="Ribosomal_L20"/>
    <property type="match status" value="1"/>
</dbReference>
<dbReference type="PRINTS" id="PR00062">
    <property type="entry name" value="RIBOSOMALL20"/>
</dbReference>
<dbReference type="SUPFAM" id="SSF74731">
    <property type="entry name" value="Ribosomal protein L20"/>
    <property type="match status" value="1"/>
</dbReference>
<dbReference type="PROSITE" id="PS00937">
    <property type="entry name" value="RIBOSOMAL_L20"/>
    <property type="match status" value="1"/>
</dbReference>
<accession>B7M1C4</accession>
<proteinExistence type="inferred from homology"/>
<organism>
    <name type="scientific">Escherichia coli O8 (strain IAI1)</name>
    <dbReference type="NCBI Taxonomy" id="585034"/>
    <lineage>
        <taxon>Bacteria</taxon>
        <taxon>Pseudomonadati</taxon>
        <taxon>Pseudomonadota</taxon>
        <taxon>Gammaproteobacteria</taxon>
        <taxon>Enterobacterales</taxon>
        <taxon>Enterobacteriaceae</taxon>
        <taxon>Escherichia</taxon>
    </lineage>
</organism>
<protein>
    <recommendedName>
        <fullName evidence="1">Large ribosomal subunit protein bL20</fullName>
    </recommendedName>
    <alternativeName>
        <fullName evidence="2">50S ribosomal protein L20</fullName>
    </alternativeName>
</protein>
<evidence type="ECO:0000255" key="1">
    <source>
        <dbReference type="HAMAP-Rule" id="MF_00382"/>
    </source>
</evidence>
<evidence type="ECO:0000305" key="2"/>
<sequence length="118" mass="13497">MARVKRGVIARARHKKILKQAKGYYGARSRVYRVAFQAVIKAGQYAYRDRRQRKRQFRQLWIARINAAARQNGISYSKFINGLKKASVEIDRKILADIAVFDKVAFTALVEKAKAALA</sequence>
<comment type="function">
    <text evidence="1">Binds directly to 23S ribosomal RNA and is necessary for the in vitro assembly process of the 50S ribosomal subunit. It is not involved in the protein synthesizing functions of that subunit.</text>
</comment>
<comment type="similarity">
    <text evidence="1">Belongs to the bacterial ribosomal protein bL20 family.</text>
</comment>
<gene>
    <name evidence="1" type="primary">rplT</name>
    <name type="ordered locus">ECIAI1_1771</name>
</gene>
<keyword id="KW-0687">Ribonucleoprotein</keyword>
<keyword id="KW-0689">Ribosomal protein</keyword>
<keyword id="KW-0694">RNA-binding</keyword>
<keyword id="KW-0699">rRNA-binding</keyword>
<name>RL20_ECO8A</name>
<feature type="chain" id="PRO_1000122311" description="Large ribosomal subunit protein bL20">
    <location>
        <begin position="1"/>
        <end position="118"/>
    </location>
</feature>
<reference key="1">
    <citation type="journal article" date="2009" name="PLoS Genet.">
        <title>Organised genome dynamics in the Escherichia coli species results in highly diverse adaptive paths.</title>
        <authorList>
            <person name="Touchon M."/>
            <person name="Hoede C."/>
            <person name="Tenaillon O."/>
            <person name="Barbe V."/>
            <person name="Baeriswyl S."/>
            <person name="Bidet P."/>
            <person name="Bingen E."/>
            <person name="Bonacorsi S."/>
            <person name="Bouchier C."/>
            <person name="Bouvet O."/>
            <person name="Calteau A."/>
            <person name="Chiapello H."/>
            <person name="Clermont O."/>
            <person name="Cruveiller S."/>
            <person name="Danchin A."/>
            <person name="Diard M."/>
            <person name="Dossat C."/>
            <person name="Karoui M.E."/>
            <person name="Frapy E."/>
            <person name="Garry L."/>
            <person name="Ghigo J.M."/>
            <person name="Gilles A.M."/>
            <person name="Johnson J."/>
            <person name="Le Bouguenec C."/>
            <person name="Lescat M."/>
            <person name="Mangenot S."/>
            <person name="Martinez-Jehanne V."/>
            <person name="Matic I."/>
            <person name="Nassif X."/>
            <person name="Oztas S."/>
            <person name="Petit M.A."/>
            <person name="Pichon C."/>
            <person name="Rouy Z."/>
            <person name="Ruf C.S."/>
            <person name="Schneider D."/>
            <person name="Tourret J."/>
            <person name="Vacherie B."/>
            <person name="Vallenet D."/>
            <person name="Medigue C."/>
            <person name="Rocha E.P.C."/>
            <person name="Denamur E."/>
        </authorList>
    </citation>
    <scope>NUCLEOTIDE SEQUENCE [LARGE SCALE GENOMIC DNA]</scope>
    <source>
        <strain>IAI1</strain>
    </source>
</reference>